<protein>
    <recommendedName>
        <fullName evidence="1">Nucleoprotein</fullName>
    </recommendedName>
    <alternativeName>
        <fullName evidence="1">Nucleocapsid protein</fullName>
        <shortName evidence="1">Protein N</shortName>
    </alternativeName>
</protein>
<organism>
    <name type="scientific">Influenza A virus (strain A/Equine/Kentucky/2/1986 H3N8)</name>
    <dbReference type="NCBI Taxonomy" id="385605"/>
    <lineage>
        <taxon>Viruses</taxon>
        <taxon>Riboviria</taxon>
        <taxon>Orthornavirae</taxon>
        <taxon>Negarnaviricota</taxon>
        <taxon>Polyploviricotina</taxon>
        <taxon>Insthoviricetes</taxon>
        <taxon>Articulavirales</taxon>
        <taxon>Orthomyxoviridae</taxon>
        <taxon>Alphainfluenzavirus</taxon>
        <taxon>Alphainfluenzavirus influenzae</taxon>
        <taxon>Influenza A virus</taxon>
    </lineage>
</organism>
<feature type="chain" id="PRO_0000079061" description="Nucleoprotein">
    <location>
        <begin position="1"/>
        <end position="498"/>
    </location>
</feature>
<feature type="region of interest" description="Disordered" evidence="2">
    <location>
        <begin position="1"/>
        <end position="21"/>
    </location>
</feature>
<feature type="short sequence motif" description="Unconventional nuclear localization signal" evidence="1">
    <location>
        <begin position="1"/>
        <end position="18"/>
    </location>
</feature>
<feature type="short sequence motif" description="Bipartite nuclear localization signal" evidence="1">
    <location>
        <begin position="198"/>
        <end position="216"/>
    </location>
</feature>
<accession>P67914</accession>
<accession>P15674</accession>
<proteinExistence type="inferred from homology"/>
<gene>
    <name evidence="1" type="primary">NP</name>
</gene>
<name>NCAP_I86A2</name>
<sequence length="498" mass="56203">MASQGTKRSYEQMETGGERQNATEIRASVGRMVGGIGRFYVQMCTELKLNDHEGRLIQNSITIERMVLSAFDERRNKYLEEHPSAGKDPKKTGGPIYRRKDGKWMRELILHDKEEIMRIWRQANNGEDATAGLTHMMIWHSNLNDTTYQRTRALVRAGMDPRMCSLMQGSTLPRRSGAAGAAVKGVGTMVMELIRMIKRGINDRNFWRGENGRRTRIAYERMCNILKGKFQTAAQRAMMDQVREGRNPGNAEIEDLIFLARSALILRGSVAHKSCLPACVYGLAVASGYDFEKEGYSLVGIDPFKLLQNSQIFSLIRPKENPAHKSQLVWMACHSAAFEDLRVLNFIRGTKVIPRGQLATRGVQIASNENMETIDSSTLELRSRYWAIRTRSGGNTSQQRASAGQISVQPTFSVQRNLPFERATIMAAFTGNTERRTSDMRTEIIRMMENARSEDVSFQGRGVFELSDEKATNPIVPSFDMSNEGSYFFGDNAEEFDS</sequence>
<organismHost>
    <name type="scientific">Aves</name>
    <dbReference type="NCBI Taxonomy" id="8782"/>
</organismHost>
<organismHost>
    <name type="scientific">Equus caballus</name>
    <name type="common">Horse</name>
    <dbReference type="NCBI Taxonomy" id="9796"/>
</organismHost>
<keyword id="KW-0167">Capsid protein</keyword>
<keyword id="KW-1139">Helical capsid protein</keyword>
<keyword id="KW-1048">Host nucleus</keyword>
<keyword id="KW-0945">Host-virus interaction</keyword>
<keyword id="KW-0687">Ribonucleoprotein</keyword>
<keyword id="KW-0694">RNA-binding</keyword>
<keyword id="KW-0543">Viral nucleoprotein</keyword>
<keyword id="KW-1163">Viral penetration into host nucleus</keyword>
<keyword id="KW-0946">Virion</keyword>
<keyword id="KW-1160">Virus entry into host cell</keyword>
<reference key="1">
    <citation type="journal article" date="1990" name="J. Virol.">
        <title>Evolution of the nucleoprotein gene of influenza A virus.</title>
        <authorList>
            <person name="Gorman O.T."/>
            <person name="Bean W.J."/>
            <person name="Kawaoka Y."/>
            <person name="Webster R.G."/>
        </authorList>
    </citation>
    <scope>NUCLEOTIDE SEQUENCE [GENOMIC RNA]</scope>
</reference>
<comment type="function">
    <text evidence="1">Encapsidates the negative strand viral RNA, protecting it from nucleases. The encapsidated genomic RNA is termed the ribonucleoprotein (RNP) and serves as template for transcription and replication. The RNP needs to be localized in the host nucleus to start an infectious cycle, but is too large to diffuse through the nuclear pore complex. NP comprises at least 2 nuclear localization signals that are responsible for the active RNP import into the nucleus through cellular importin alpha/beta pathway. Later in the infection, nclear export of RNPs are mediated through viral proteins NEP interacting with M1 which binds nucleoproteins. It is possible that nucleoprotein binds directly host exportin-1/XPO1 and plays an active role in RNPs nuclear export. M1 interaction with RNP seems to hide nucleoprotein's nuclear localization signals. Soon after a virion infects a new cell, M1 dissociates from the RNP under acidification of the virion driven by M2 protein. Dissociation of M1 from RNP unmasks nucleoprotein's nuclear localization signals, targeting the RNP to the nucleus.</text>
</comment>
<comment type="subunit">
    <text evidence="1">Homomultimerizes to form the nucleocapsid. May bind host exportin-1/XPO1. Binds to viral genomic RNA. Protein-RNA contacts are mediated by a combination of electrostatic interactions between positively charged residues and the phosphate backbone and planar interactions between aromatic side chains and bases.</text>
</comment>
<comment type="subcellular location">
    <subcellularLocation>
        <location evidence="1">Virion</location>
    </subcellularLocation>
    <subcellularLocation>
        <location evidence="1">Host nucleus</location>
    </subcellularLocation>
</comment>
<comment type="PTM">
    <text evidence="1">Late in virus-infected cells, may be cleaved from a 56-kDa protein to a 53-kDa protein by a cellular caspase. This cleavage might be a marker for the onset of apoptosis in infected cells or have a specific function in virus host interaction.</text>
</comment>
<comment type="similarity">
    <text evidence="1">Belongs to the influenza viruses nucleoprotein family.</text>
</comment>
<evidence type="ECO:0000255" key="1">
    <source>
        <dbReference type="HAMAP-Rule" id="MF_04070"/>
    </source>
</evidence>
<evidence type="ECO:0000256" key="2">
    <source>
        <dbReference type="SAM" id="MobiDB-lite"/>
    </source>
</evidence>
<dbReference type="EMBL" id="M30751">
    <property type="protein sequence ID" value="AAA43458.1"/>
    <property type="molecule type" value="Genomic_RNA"/>
</dbReference>
<dbReference type="SMR" id="P67914"/>
<dbReference type="GO" id="GO:0019029">
    <property type="term" value="C:helical viral capsid"/>
    <property type="evidence" value="ECO:0007669"/>
    <property type="project" value="UniProtKB-UniRule"/>
</dbReference>
<dbReference type="GO" id="GO:0043657">
    <property type="term" value="C:host cell"/>
    <property type="evidence" value="ECO:0007669"/>
    <property type="project" value="GOC"/>
</dbReference>
<dbReference type="GO" id="GO:0042025">
    <property type="term" value="C:host cell nucleus"/>
    <property type="evidence" value="ECO:0007669"/>
    <property type="project" value="UniProtKB-SubCell"/>
</dbReference>
<dbReference type="GO" id="GO:1990904">
    <property type="term" value="C:ribonucleoprotein complex"/>
    <property type="evidence" value="ECO:0007669"/>
    <property type="project" value="UniProtKB-KW"/>
</dbReference>
<dbReference type="GO" id="GO:0019013">
    <property type="term" value="C:viral nucleocapsid"/>
    <property type="evidence" value="ECO:0007669"/>
    <property type="project" value="UniProtKB-UniRule"/>
</dbReference>
<dbReference type="GO" id="GO:0003723">
    <property type="term" value="F:RNA binding"/>
    <property type="evidence" value="ECO:0007669"/>
    <property type="project" value="UniProtKB-UniRule"/>
</dbReference>
<dbReference type="GO" id="GO:0005198">
    <property type="term" value="F:structural molecule activity"/>
    <property type="evidence" value="ECO:0007669"/>
    <property type="project" value="UniProtKB-UniRule"/>
</dbReference>
<dbReference type="GO" id="GO:0046718">
    <property type="term" value="P:symbiont entry into host cell"/>
    <property type="evidence" value="ECO:0007669"/>
    <property type="project" value="UniProtKB-KW"/>
</dbReference>
<dbReference type="GO" id="GO:0075732">
    <property type="term" value="P:viral penetration into host nucleus"/>
    <property type="evidence" value="ECO:0007669"/>
    <property type="project" value="UniProtKB-UniRule"/>
</dbReference>
<dbReference type="HAMAP" id="MF_04070">
    <property type="entry name" value="INFV_NCAP"/>
    <property type="match status" value="1"/>
</dbReference>
<dbReference type="InterPro" id="IPR002141">
    <property type="entry name" value="Flu_NP"/>
</dbReference>
<dbReference type="Pfam" id="PF00506">
    <property type="entry name" value="Flu_NP"/>
    <property type="match status" value="1"/>
</dbReference>
<dbReference type="SUPFAM" id="SSF161003">
    <property type="entry name" value="flu NP-like"/>
    <property type="match status" value="1"/>
</dbReference>